<gene>
    <name type="primary">NAC021</name>
    <name type="synonym">NAC022</name>
    <name type="synonym">NAC1</name>
    <name type="ordered locus">At1g56010</name>
    <name type="ORF">F14J16.32</name>
    <name type="ORF">T6H22.19</name>
</gene>
<name>NAC22_ARATH</name>
<comment type="function">
    <text evidence="3">Transcriptional activator that mediates auxin signaling to promote lateral root development. Activates the expression of two downstream auxin-responsive genes, DBP and AIR3.</text>
</comment>
<comment type="subunit">
    <text evidence="4">Dimer. Interacts with SINAT5.</text>
</comment>
<comment type="subcellular location">
    <subcellularLocation>
        <location>Nucleus</location>
    </subcellularLocation>
</comment>
<comment type="alternative products">
    <event type="alternative splicing"/>
    <isoform>
        <id>Q84TE6-1</id>
        <name>1</name>
        <name>ANAC022</name>
        <sequence type="displayed"/>
    </isoform>
    <isoform>
        <id>Q84TE6-2</id>
        <name>2</name>
        <name>ANAC021</name>
        <sequence type="described" ref="VSP_011189"/>
    </isoform>
</comment>
<comment type="tissue specificity">
    <text evidence="3">Predominantly expressed in the root tip and in lateral root initiation sites. Also detected in expanding cotyledon, and in leaf primordia.</text>
</comment>
<comment type="induction">
    <text>Induced by auxin.</text>
</comment>
<comment type="domain">
    <text>The NAC domain includes a DNA-binding domain and a dimerization domain.</text>
</comment>
<comment type="PTM">
    <text evidence="4 8">Ubiquitinated (Probable). The interaction with SINAT5 mediate its proteasome-dependent degradation (PubMed:12226665).</text>
</comment>
<comment type="sequence caution" evidence="7">
    <conflict type="erroneous gene model prediction">
        <sequence resource="EMBL-CDS" id="AAF02847"/>
    </conflict>
</comment>
<dbReference type="EMBL" id="AF198054">
    <property type="protein sequence ID" value="AAF21437.1"/>
    <property type="molecule type" value="mRNA"/>
</dbReference>
<dbReference type="EMBL" id="AC002304">
    <property type="protein sequence ID" value="AAF79328.1"/>
    <property type="molecule type" value="Genomic_DNA"/>
</dbReference>
<dbReference type="EMBL" id="AC009894">
    <property type="protein sequence ID" value="AAF02847.1"/>
    <property type="status" value="ALT_SEQ"/>
    <property type="molecule type" value="Genomic_DNA"/>
</dbReference>
<dbReference type="EMBL" id="CP002684">
    <property type="protein sequence ID" value="AEE33330.1"/>
    <property type="molecule type" value="Genomic_DNA"/>
</dbReference>
<dbReference type="EMBL" id="CP002684">
    <property type="protein sequence ID" value="AEE33331.1"/>
    <property type="molecule type" value="Genomic_DNA"/>
</dbReference>
<dbReference type="EMBL" id="BT005873">
    <property type="protein sequence ID" value="AAO64808.1"/>
    <property type="molecule type" value="mRNA"/>
</dbReference>
<dbReference type="EMBL" id="AK228347">
    <property type="protein sequence ID" value="BAF00287.1"/>
    <property type="molecule type" value="mRNA"/>
</dbReference>
<dbReference type="EMBL" id="AY085996">
    <property type="protein sequence ID" value="AAM63206.1"/>
    <property type="molecule type" value="mRNA"/>
</dbReference>
<dbReference type="PIR" id="C96601">
    <property type="entry name" value="C96601"/>
</dbReference>
<dbReference type="RefSeq" id="NP_175997.1">
    <molecule id="Q84TE6-1"/>
    <property type="nucleotide sequence ID" value="NM_104479.2"/>
</dbReference>
<dbReference type="RefSeq" id="NP_849817.1">
    <molecule id="Q84TE6-2"/>
    <property type="nucleotide sequence ID" value="NM_179486.2"/>
</dbReference>
<dbReference type="SMR" id="Q84TE6"/>
<dbReference type="BioGRID" id="27277">
    <property type="interactions" value="5"/>
</dbReference>
<dbReference type="FunCoup" id="Q84TE6">
    <property type="interactions" value="132"/>
</dbReference>
<dbReference type="IntAct" id="Q84TE6">
    <property type="interactions" value="2"/>
</dbReference>
<dbReference type="STRING" id="3702.Q84TE6"/>
<dbReference type="PaxDb" id="3702-AT1G56010.2"/>
<dbReference type="EnsemblPlants" id="AT1G56010.1">
    <molecule id="Q84TE6-2"/>
    <property type="protein sequence ID" value="AT1G56010.1"/>
    <property type="gene ID" value="AT1G56010"/>
</dbReference>
<dbReference type="EnsemblPlants" id="AT1G56010.2">
    <molecule id="Q84TE6-1"/>
    <property type="protein sequence ID" value="AT1G56010.2"/>
    <property type="gene ID" value="AT1G56010"/>
</dbReference>
<dbReference type="GeneID" id="842052"/>
<dbReference type="Gramene" id="AT1G56010.1">
    <molecule id="Q84TE6-2"/>
    <property type="protein sequence ID" value="AT1G56010.1"/>
    <property type="gene ID" value="AT1G56010"/>
</dbReference>
<dbReference type="Gramene" id="AT1G56010.2">
    <molecule id="Q84TE6-1"/>
    <property type="protein sequence ID" value="AT1G56010.2"/>
    <property type="gene ID" value="AT1G56010"/>
</dbReference>
<dbReference type="KEGG" id="ath:AT1G56010"/>
<dbReference type="Araport" id="AT1G56010"/>
<dbReference type="TAIR" id="AT1G56010">
    <property type="gene designation" value="NAC1"/>
</dbReference>
<dbReference type="eggNOG" id="ENOG502QRZB">
    <property type="taxonomic scope" value="Eukaryota"/>
</dbReference>
<dbReference type="HOGENOM" id="CLU_035664_5_1_1"/>
<dbReference type="InParanoid" id="Q84TE6"/>
<dbReference type="OMA" id="DIPKMAC"/>
<dbReference type="OrthoDB" id="744205at2759"/>
<dbReference type="PhylomeDB" id="Q84TE6"/>
<dbReference type="PRO" id="PR:Q84TE6"/>
<dbReference type="Proteomes" id="UP000006548">
    <property type="component" value="Chromosome 1"/>
</dbReference>
<dbReference type="ExpressionAtlas" id="Q84TE6">
    <property type="expression patterns" value="baseline and differential"/>
</dbReference>
<dbReference type="GO" id="GO:0005634">
    <property type="term" value="C:nucleus"/>
    <property type="evidence" value="ECO:0007669"/>
    <property type="project" value="UniProtKB-SubCell"/>
</dbReference>
<dbReference type="GO" id="GO:0003677">
    <property type="term" value="F:DNA binding"/>
    <property type="evidence" value="ECO:0007669"/>
    <property type="project" value="UniProtKB-KW"/>
</dbReference>
<dbReference type="GO" id="GO:0003700">
    <property type="term" value="F:DNA-binding transcription factor activity"/>
    <property type="evidence" value="ECO:0000250"/>
    <property type="project" value="TAIR"/>
</dbReference>
<dbReference type="GO" id="GO:0009734">
    <property type="term" value="P:auxin-activated signaling pathway"/>
    <property type="evidence" value="ECO:0000304"/>
    <property type="project" value="TAIR"/>
</dbReference>
<dbReference type="GO" id="GO:0048527">
    <property type="term" value="P:lateral root development"/>
    <property type="evidence" value="ECO:0000304"/>
    <property type="project" value="TAIR"/>
</dbReference>
<dbReference type="FunFam" id="2.170.150.80:FF:000002">
    <property type="entry name" value="Nac domain-containing protein 86"/>
    <property type="match status" value="1"/>
</dbReference>
<dbReference type="Gene3D" id="2.170.150.80">
    <property type="entry name" value="NAC domain"/>
    <property type="match status" value="1"/>
</dbReference>
<dbReference type="InterPro" id="IPR003441">
    <property type="entry name" value="NAC-dom"/>
</dbReference>
<dbReference type="InterPro" id="IPR036093">
    <property type="entry name" value="NAC_dom_sf"/>
</dbReference>
<dbReference type="PANTHER" id="PTHR31744:SF96">
    <property type="entry name" value="NAC DOMAIN-CONTAINING PROTEIN 21_22"/>
    <property type="match status" value="1"/>
</dbReference>
<dbReference type="PANTHER" id="PTHR31744">
    <property type="entry name" value="PROTEIN CUP-SHAPED COTYLEDON 2-RELATED"/>
    <property type="match status" value="1"/>
</dbReference>
<dbReference type="Pfam" id="PF02365">
    <property type="entry name" value="NAM"/>
    <property type="match status" value="1"/>
</dbReference>
<dbReference type="SUPFAM" id="SSF101941">
    <property type="entry name" value="NAC domain"/>
    <property type="match status" value="1"/>
</dbReference>
<dbReference type="PROSITE" id="PS51005">
    <property type="entry name" value="NAC"/>
    <property type="match status" value="1"/>
</dbReference>
<proteinExistence type="evidence at protein level"/>
<sequence>METEEEMKESSISMVEAKLPPGFRFHPKDDELVCDYLMRRSLHNNHRPPLVLIQVDLNKCEPWDIPKMACVGGKDWYFYSQRDRKYATGLRTNRATATGYWKATGKDRTILRKGKLVGMRKTLVFYQGRAPRGRKTDWVMHEFRLQGSHHPPNHSLSSPKEDWVLCRVFHKNTEGVICRDNMGSCFDETASASLPPLMDPYINFDQEPSSYLSDDHHYIINEHVPCFSNLSQNQTLNSNLTNSVSELKIPCKNPNPLFTGGSASATLTGLDSFCSSDQMVLRALLSQLTKIDGSLGPKESQSYGEGSSESLLTDIGIPSTVWNC</sequence>
<reference key="1">
    <citation type="journal article" date="2000" name="Genes Dev.">
        <title>Arabidopsis NAC1 transduces auxin signal downstream of TIR1 to promote lateral root development.</title>
        <authorList>
            <person name="Xie Q."/>
            <person name="Frugis G."/>
            <person name="Colgan D.F."/>
            <person name="Chua N.-H."/>
        </authorList>
    </citation>
    <scope>NUCLEOTIDE SEQUENCE [GENOMIC DNA / MRNA]</scope>
    <scope>FUNCTION</scope>
    <scope>TISSUE SPECIFICITY</scope>
    <scope>INDUCTION (ISOFORM 1)</scope>
    <source>
        <strain>cv. Landsberg erecta</strain>
    </source>
</reference>
<reference key="2">
    <citation type="journal article" date="2000" name="Nature">
        <title>Sequence and analysis of chromosome 1 of the plant Arabidopsis thaliana.</title>
        <authorList>
            <person name="Theologis A."/>
            <person name="Ecker J.R."/>
            <person name="Palm C.J."/>
            <person name="Federspiel N.A."/>
            <person name="Kaul S."/>
            <person name="White O."/>
            <person name="Alonso J."/>
            <person name="Altafi H."/>
            <person name="Araujo R."/>
            <person name="Bowman C.L."/>
            <person name="Brooks S.Y."/>
            <person name="Buehler E."/>
            <person name="Chan A."/>
            <person name="Chao Q."/>
            <person name="Chen H."/>
            <person name="Cheuk R.F."/>
            <person name="Chin C.W."/>
            <person name="Chung M.K."/>
            <person name="Conn L."/>
            <person name="Conway A.B."/>
            <person name="Conway A.R."/>
            <person name="Creasy T.H."/>
            <person name="Dewar K."/>
            <person name="Dunn P."/>
            <person name="Etgu P."/>
            <person name="Feldblyum T.V."/>
            <person name="Feng J.-D."/>
            <person name="Fong B."/>
            <person name="Fujii C.Y."/>
            <person name="Gill J.E."/>
            <person name="Goldsmith A.D."/>
            <person name="Haas B."/>
            <person name="Hansen N.F."/>
            <person name="Hughes B."/>
            <person name="Huizar L."/>
            <person name="Hunter J.L."/>
            <person name="Jenkins J."/>
            <person name="Johnson-Hopson C."/>
            <person name="Khan S."/>
            <person name="Khaykin E."/>
            <person name="Kim C.J."/>
            <person name="Koo H.L."/>
            <person name="Kremenetskaia I."/>
            <person name="Kurtz D.B."/>
            <person name="Kwan A."/>
            <person name="Lam B."/>
            <person name="Langin-Hooper S."/>
            <person name="Lee A."/>
            <person name="Lee J.M."/>
            <person name="Lenz C.A."/>
            <person name="Li J.H."/>
            <person name="Li Y.-P."/>
            <person name="Lin X."/>
            <person name="Liu S.X."/>
            <person name="Liu Z.A."/>
            <person name="Luros J.S."/>
            <person name="Maiti R."/>
            <person name="Marziali A."/>
            <person name="Militscher J."/>
            <person name="Miranda M."/>
            <person name="Nguyen M."/>
            <person name="Nierman W.C."/>
            <person name="Osborne B.I."/>
            <person name="Pai G."/>
            <person name="Peterson J."/>
            <person name="Pham P.K."/>
            <person name="Rizzo M."/>
            <person name="Rooney T."/>
            <person name="Rowley D."/>
            <person name="Sakano H."/>
            <person name="Salzberg S.L."/>
            <person name="Schwartz J.R."/>
            <person name="Shinn P."/>
            <person name="Southwick A.M."/>
            <person name="Sun H."/>
            <person name="Tallon L.J."/>
            <person name="Tambunga G."/>
            <person name="Toriumi M.J."/>
            <person name="Town C.D."/>
            <person name="Utterback T."/>
            <person name="Van Aken S."/>
            <person name="Vaysberg M."/>
            <person name="Vysotskaia V.S."/>
            <person name="Walker M."/>
            <person name="Wu D."/>
            <person name="Yu G."/>
            <person name="Fraser C.M."/>
            <person name="Venter J.C."/>
            <person name="Davis R.W."/>
        </authorList>
    </citation>
    <scope>NUCLEOTIDE SEQUENCE [LARGE SCALE GENOMIC DNA]</scope>
    <source>
        <strain>cv. Columbia</strain>
    </source>
</reference>
<reference key="3">
    <citation type="journal article" date="2017" name="Plant J.">
        <title>Araport11: a complete reannotation of the Arabidopsis thaliana reference genome.</title>
        <authorList>
            <person name="Cheng C.Y."/>
            <person name="Krishnakumar V."/>
            <person name="Chan A.P."/>
            <person name="Thibaud-Nissen F."/>
            <person name="Schobel S."/>
            <person name="Town C.D."/>
        </authorList>
    </citation>
    <scope>GENOME REANNOTATION</scope>
    <source>
        <strain>cv. Columbia</strain>
    </source>
</reference>
<reference key="4">
    <citation type="journal article" date="2003" name="Science">
        <title>Empirical analysis of transcriptional activity in the Arabidopsis genome.</title>
        <authorList>
            <person name="Yamada K."/>
            <person name="Lim J."/>
            <person name="Dale J.M."/>
            <person name="Chen H."/>
            <person name="Shinn P."/>
            <person name="Palm C.J."/>
            <person name="Southwick A.M."/>
            <person name="Wu H.C."/>
            <person name="Kim C.J."/>
            <person name="Nguyen M."/>
            <person name="Pham P.K."/>
            <person name="Cheuk R.F."/>
            <person name="Karlin-Newmann G."/>
            <person name="Liu S.X."/>
            <person name="Lam B."/>
            <person name="Sakano H."/>
            <person name="Wu T."/>
            <person name="Yu G."/>
            <person name="Miranda M."/>
            <person name="Quach H.L."/>
            <person name="Tripp M."/>
            <person name="Chang C.H."/>
            <person name="Lee J.M."/>
            <person name="Toriumi M.J."/>
            <person name="Chan M.M."/>
            <person name="Tang C.C."/>
            <person name="Onodera C.S."/>
            <person name="Deng J.M."/>
            <person name="Akiyama K."/>
            <person name="Ansari Y."/>
            <person name="Arakawa T."/>
            <person name="Banh J."/>
            <person name="Banno F."/>
            <person name="Bowser L."/>
            <person name="Brooks S.Y."/>
            <person name="Carninci P."/>
            <person name="Chao Q."/>
            <person name="Choy N."/>
            <person name="Enju A."/>
            <person name="Goldsmith A.D."/>
            <person name="Gurjal M."/>
            <person name="Hansen N.F."/>
            <person name="Hayashizaki Y."/>
            <person name="Johnson-Hopson C."/>
            <person name="Hsuan V.W."/>
            <person name="Iida K."/>
            <person name="Karnes M."/>
            <person name="Khan S."/>
            <person name="Koesema E."/>
            <person name="Ishida J."/>
            <person name="Jiang P.X."/>
            <person name="Jones T."/>
            <person name="Kawai J."/>
            <person name="Kamiya A."/>
            <person name="Meyers C."/>
            <person name="Nakajima M."/>
            <person name="Narusaka M."/>
            <person name="Seki M."/>
            <person name="Sakurai T."/>
            <person name="Satou M."/>
            <person name="Tamse R."/>
            <person name="Vaysberg M."/>
            <person name="Wallender E.K."/>
            <person name="Wong C."/>
            <person name="Yamamura Y."/>
            <person name="Yuan S."/>
            <person name="Shinozaki K."/>
            <person name="Davis R.W."/>
            <person name="Theologis A."/>
            <person name="Ecker J.R."/>
        </authorList>
    </citation>
    <scope>NUCLEOTIDE SEQUENCE [LARGE SCALE MRNA] (ISOFORM 2)</scope>
    <source>
        <strain>cv. Columbia</strain>
    </source>
</reference>
<reference key="5">
    <citation type="submission" date="2006-07" db="EMBL/GenBank/DDBJ databases">
        <title>Large-scale analysis of RIKEN Arabidopsis full-length (RAFL) cDNAs.</title>
        <authorList>
            <person name="Totoki Y."/>
            <person name="Seki M."/>
            <person name="Ishida J."/>
            <person name="Nakajima M."/>
            <person name="Enju A."/>
            <person name="Kamiya A."/>
            <person name="Narusaka M."/>
            <person name="Shin-i T."/>
            <person name="Nakagawa M."/>
            <person name="Sakamoto N."/>
            <person name="Oishi K."/>
            <person name="Kohara Y."/>
            <person name="Kobayashi M."/>
            <person name="Toyoda A."/>
            <person name="Sakaki Y."/>
            <person name="Sakurai T."/>
            <person name="Iida K."/>
            <person name="Akiyama K."/>
            <person name="Satou M."/>
            <person name="Toyoda T."/>
            <person name="Konagaya A."/>
            <person name="Carninci P."/>
            <person name="Kawai J."/>
            <person name="Hayashizaki Y."/>
            <person name="Shinozaki K."/>
        </authorList>
    </citation>
    <scope>NUCLEOTIDE SEQUENCE [LARGE SCALE MRNA] (ISOFORM 2)</scope>
    <source>
        <strain>cv. Columbia</strain>
    </source>
</reference>
<reference key="6">
    <citation type="submission" date="2002-03" db="EMBL/GenBank/DDBJ databases">
        <title>Full-length cDNA from Arabidopsis thaliana.</title>
        <authorList>
            <person name="Brover V.V."/>
            <person name="Troukhan M.E."/>
            <person name="Alexandrov N.A."/>
            <person name="Lu Y.-P."/>
            <person name="Flavell R.B."/>
            <person name="Feldmann K.A."/>
        </authorList>
    </citation>
    <scope>NUCLEOTIDE SEQUENCE [LARGE SCALE MRNA] (ISOFORM 1)</scope>
</reference>
<reference key="7">
    <citation type="journal article" date="2002" name="Nature">
        <title>SINAT5 promotes ubiquitin-related degradation of NAC1 to attenuate auxin signals.</title>
        <authorList>
            <person name="Xie Q."/>
            <person name="Guo H.-S."/>
            <person name="Dallman G."/>
            <person name="Fang S."/>
            <person name="Weissman A.M."/>
            <person name="Chua N.-H."/>
        </authorList>
    </citation>
    <scope>INTERACTION WITH SINAT5</scope>
    <scope>UBIQUITINATION</scope>
    <scope>DEGRADATION</scope>
</reference>
<reference key="8">
    <citation type="journal article" date="2003" name="DNA Res.">
        <title>Comprehensive analysis of NAC family genes in Oryza sativa and Arabidopsis thaliana.</title>
        <authorList>
            <person name="Ooka H."/>
            <person name="Satoh K."/>
            <person name="Doi K."/>
            <person name="Nagata T."/>
            <person name="Otomo Y."/>
            <person name="Murakami K."/>
            <person name="Matsubara K."/>
            <person name="Osato N."/>
            <person name="Kawai J."/>
            <person name="Carninci P."/>
            <person name="Hayashizaki Y."/>
            <person name="Suzuki K."/>
            <person name="Kojima K."/>
            <person name="Takahara Y."/>
            <person name="Yamamoto K."/>
            <person name="Kikuchi S."/>
        </authorList>
    </citation>
    <scope>GENE FAMILY</scope>
    <scope>NOMENCLATURE</scope>
</reference>
<keyword id="KW-0010">Activator</keyword>
<keyword id="KW-0025">Alternative splicing</keyword>
<keyword id="KW-0238">DNA-binding</keyword>
<keyword id="KW-0539">Nucleus</keyword>
<keyword id="KW-1185">Reference proteome</keyword>
<keyword id="KW-0804">Transcription</keyword>
<keyword id="KW-0805">Transcription regulation</keyword>
<keyword id="KW-0832">Ubl conjugation</keyword>
<accession>Q84TE6</accession>
<accession>Q0WRG2</accession>
<accession>Q9SE10</accession>
<accession>Q9SGS9</accession>
<feature type="chain" id="PRO_0000132310" description="NAC domain-containing protein 21/22">
    <location>
        <begin position="1"/>
        <end position="324"/>
    </location>
</feature>
<feature type="domain" description="NAC" evidence="2">
    <location>
        <begin position="19"/>
        <end position="171"/>
    </location>
</feature>
<feature type="short sequence motif" description="Bipartite nuclear localization signal" evidence="1">
    <location>
        <begin position="120"/>
        <end position="137"/>
    </location>
</feature>
<feature type="splice variant" id="VSP_011189" description="In isoform 2." evidence="5 6">
    <location>
        <begin position="1"/>
        <end position="67"/>
    </location>
</feature>
<protein>
    <recommendedName>
        <fullName>NAC domain-containing protein 21/22</fullName>
        <shortName>ANAC021/ANAC022</shortName>
    </recommendedName>
</protein>
<organism>
    <name type="scientific">Arabidopsis thaliana</name>
    <name type="common">Mouse-ear cress</name>
    <dbReference type="NCBI Taxonomy" id="3702"/>
    <lineage>
        <taxon>Eukaryota</taxon>
        <taxon>Viridiplantae</taxon>
        <taxon>Streptophyta</taxon>
        <taxon>Embryophyta</taxon>
        <taxon>Tracheophyta</taxon>
        <taxon>Spermatophyta</taxon>
        <taxon>Magnoliopsida</taxon>
        <taxon>eudicotyledons</taxon>
        <taxon>Gunneridae</taxon>
        <taxon>Pentapetalae</taxon>
        <taxon>rosids</taxon>
        <taxon>malvids</taxon>
        <taxon>Brassicales</taxon>
        <taxon>Brassicaceae</taxon>
        <taxon>Camelineae</taxon>
        <taxon>Arabidopsis</taxon>
    </lineage>
</organism>
<evidence type="ECO:0000255" key="1"/>
<evidence type="ECO:0000255" key="2">
    <source>
        <dbReference type="PROSITE-ProRule" id="PRU00353"/>
    </source>
</evidence>
<evidence type="ECO:0000269" key="3">
    <source>
    </source>
</evidence>
<evidence type="ECO:0000269" key="4">
    <source>
    </source>
</evidence>
<evidence type="ECO:0000303" key="5">
    <source>
    </source>
</evidence>
<evidence type="ECO:0000303" key="6">
    <source ref="5"/>
</evidence>
<evidence type="ECO:0000305" key="7"/>
<evidence type="ECO:0000305" key="8">
    <source>
    </source>
</evidence>